<geneLocation type="plasmid">
    <name>large ECE</name>
</geneLocation>
<gene>
    <name type="ordered locus">MJECL09</name>
</gene>
<feature type="chain" id="PRO_0000107501" description="Uncharacterized protein MJECL09">
    <location>
        <begin position="1"/>
        <end position="108"/>
    </location>
</feature>
<name>Y3509_METJA</name>
<sequence>MNYMKFMWNSEDGFIVEEQHKEEIPFEDWIVNTVEQLKNLQYTRYTFEELTPKTKNLEAYNKLLEILKKHTNMDIENNVKRIYHCIAENNNYKYEIAFYIVISKNWNE</sequence>
<accession>Q60271</accession>
<reference key="1">
    <citation type="journal article" date="1996" name="Science">
        <title>Complete genome sequence of the methanogenic archaeon, Methanococcus jannaschii.</title>
        <authorList>
            <person name="Bult C.J."/>
            <person name="White O."/>
            <person name="Olsen G.J."/>
            <person name="Zhou L."/>
            <person name="Fleischmann R.D."/>
            <person name="Sutton G.G."/>
            <person name="Blake J.A."/>
            <person name="FitzGerald L.M."/>
            <person name="Clayton R.A."/>
            <person name="Gocayne J.D."/>
            <person name="Kerlavage A.R."/>
            <person name="Dougherty B.A."/>
            <person name="Tomb J.-F."/>
            <person name="Adams M.D."/>
            <person name="Reich C.I."/>
            <person name="Overbeek R."/>
            <person name="Kirkness E.F."/>
            <person name="Weinstock K.G."/>
            <person name="Merrick J.M."/>
            <person name="Glodek A."/>
            <person name="Scott J.L."/>
            <person name="Geoghagen N.S.M."/>
            <person name="Weidman J.F."/>
            <person name="Fuhrmann J.L."/>
            <person name="Nguyen D."/>
            <person name="Utterback T.R."/>
            <person name="Kelley J.M."/>
            <person name="Peterson J.D."/>
            <person name="Sadow P.W."/>
            <person name="Hanna M.C."/>
            <person name="Cotton M.D."/>
            <person name="Roberts K.M."/>
            <person name="Hurst M.A."/>
            <person name="Kaine B.P."/>
            <person name="Borodovsky M."/>
            <person name="Klenk H.-P."/>
            <person name="Fraser C.M."/>
            <person name="Smith H.O."/>
            <person name="Woese C.R."/>
            <person name="Venter J.C."/>
        </authorList>
    </citation>
    <scope>NUCLEOTIDE SEQUENCE [LARGE SCALE GENOMIC DNA]</scope>
    <source>
        <strain>ATCC 43067 / DSM 2661 / JAL-1 / JCM 10045 / NBRC 100440</strain>
    </source>
</reference>
<protein>
    <recommendedName>
        <fullName>Uncharacterized protein MJECL09</fullName>
    </recommendedName>
</protein>
<dbReference type="EMBL" id="L77118">
    <property type="protein sequence ID" value="AAC37082.1"/>
    <property type="molecule type" value="Genomic_DNA"/>
</dbReference>
<dbReference type="PIR" id="A64511">
    <property type="entry name" value="A64511"/>
</dbReference>
<dbReference type="RefSeq" id="WP_010890056.1">
    <property type="nucleotide sequence ID" value="NC_001732.1"/>
</dbReference>
<dbReference type="PaxDb" id="243232-MJ_ECL09"/>
<dbReference type="EnsemblBacteria" id="AAC37082">
    <property type="protein sequence ID" value="AAC37082"/>
    <property type="gene ID" value="MJ_ECL09"/>
</dbReference>
<dbReference type="GeneID" id="1450795"/>
<dbReference type="KEGG" id="mja:MJ_ECL09"/>
<dbReference type="HOGENOM" id="CLU_2191038_0_0_2"/>
<dbReference type="InParanoid" id="Q60271"/>
<dbReference type="Proteomes" id="UP000000805">
    <property type="component" value="Plasmid pDSM2661_1"/>
</dbReference>
<keyword id="KW-0614">Plasmid</keyword>
<keyword id="KW-1185">Reference proteome</keyword>
<organism>
    <name type="scientific">Methanocaldococcus jannaschii (strain ATCC 43067 / DSM 2661 / JAL-1 / JCM 10045 / NBRC 100440)</name>
    <name type="common">Methanococcus jannaschii</name>
    <dbReference type="NCBI Taxonomy" id="243232"/>
    <lineage>
        <taxon>Archaea</taxon>
        <taxon>Methanobacteriati</taxon>
        <taxon>Methanobacteriota</taxon>
        <taxon>Methanomada group</taxon>
        <taxon>Methanococci</taxon>
        <taxon>Methanococcales</taxon>
        <taxon>Methanocaldococcaceae</taxon>
        <taxon>Methanocaldococcus</taxon>
    </lineage>
</organism>
<proteinExistence type="predicted"/>